<dbReference type="EC" id="3.1.3.5" evidence="1"/>
<dbReference type="EMBL" id="CP000633">
    <property type="protein sequence ID" value="ACM36915.1"/>
    <property type="molecule type" value="Genomic_DNA"/>
</dbReference>
<dbReference type="RefSeq" id="WP_015916336.1">
    <property type="nucleotide sequence ID" value="NC_011989.1"/>
</dbReference>
<dbReference type="SMR" id="B9JXD7"/>
<dbReference type="STRING" id="311402.Avi_2664"/>
<dbReference type="KEGG" id="avi:Avi_2664"/>
<dbReference type="eggNOG" id="COG0496">
    <property type="taxonomic scope" value="Bacteria"/>
</dbReference>
<dbReference type="HOGENOM" id="CLU_045192_1_2_5"/>
<dbReference type="Proteomes" id="UP000001596">
    <property type="component" value="Chromosome 1"/>
</dbReference>
<dbReference type="GO" id="GO:0005737">
    <property type="term" value="C:cytoplasm"/>
    <property type="evidence" value="ECO:0007669"/>
    <property type="project" value="UniProtKB-SubCell"/>
</dbReference>
<dbReference type="GO" id="GO:0008254">
    <property type="term" value="F:3'-nucleotidase activity"/>
    <property type="evidence" value="ECO:0007669"/>
    <property type="project" value="TreeGrafter"/>
</dbReference>
<dbReference type="GO" id="GO:0008253">
    <property type="term" value="F:5'-nucleotidase activity"/>
    <property type="evidence" value="ECO:0007669"/>
    <property type="project" value="UniProtKB-UniRule"/>
</dbReference>
<dbReference type="GO" id="GO:0004309">
    <property type="term" value="F:exopolyphosphatase activity"/>
    <property type="evidence" value="ECO:0007669"/>
    <property type="project" value="TreeGrafter"/>
</dbReference>
<dbReference type="GO" id="GO:0046872">
    <property type="term" value="F:metal ion binding"/>
    <property type="evidence" value="ECO:0007669"/>
    <property type="project" value="UniProtKB-UniRule"/>
</dbReference>
<dbReference type="GO" id="GO:0000166">
    <property type="term" value="F:nucleotide binding"/>
    <property type="evidence" value="ECO:0007669"/>
    <property type="project" value="UniProtKB-KW"/>
</dbReference>
<dbReference type="FunFam" id="3.40.1210.10:FF:000001">
    <property type="entry name" value="5'/3'-nucleotidase SurE"/>
    <property type="match status" value="1"/>
</dbReference>
<dbReference type="Gene3D" id="3.40.1210.10">
    <property type="entry name" value="Survival protein SurE-like phosphatase/nucleotidase"/>
    <property type="match status" value="1"/>
</dbReference>
<dbReference type="HAMAP" id="MF_00060">
    <property type="entry name" value="SurE"/>
    <property type="match status" value="1"/>
</dbReference>
<dbReference type="InterPro" id="IPR030048">
    <property type="entry name" value="SurE"/>
</dbReference>
<dbReference type="InterPro" id="IPR002828">
    <property type="entry name" value="SurE-like_Pase/nucleotidase"/>
</dbReference>
<dbReference type="InterPro" id="IPR036523">
    <property type="entry name" value="SurE-like_sf"/>
</dbReference>
<dbReference type="NCBIfam" id="NF001490">
    <property type="entry name" value="PRK00346.1-4"/>
    <property type="match status" value="1"/>
</dbReference>
<dbReference type="NCBIfam" id="TIGR00087">
    <property type="entry name" value="surE"/>
    <property type="match status" value="1"/>
</dbReference>
<dbReference type="PANTHER" id="PTHR30457">
    <property type="entry name" value="5'-NUCLEOTIDASE SURE"/>
    <property type="match status" value="1"/>
</dbReference>
<dbReference type="PANTHER" id="PTHR30457:SF12">
    <property type="entry name" value="5'_3'-NUCLEOTIDASE SURE"/>
    <property type="match status" value="1"/>
</dbReference>
<dbReference type="Pfam" id="PF01975">
    <property type="entry name" value="SurE"/>
    <property type="match status" value="1"/>
</dbReference>
<dbReference type="SUPFAM" id="SSF64167">
    <property type="entry name" value="SurE-like"/>
    <property type="match status" value="1"/>
</dbReference>
<reference key="1">
    <citation type="journal article" date="2009" name="J. Bacteriol.">
        <title>Genome sequences of three Agrobacterium biovars help elucidate the evolution of multichromosome genomes in bacteria.</title>
        <authorList>
            <person name="Slater S.C."/>
            <person name="Goldman B.S."/>
            <person name="Goodner B."/>
            <person name="Setubal J.C."/>
            <person name="Farrand S.K."/>
            <person name="Nester E.W."/>
            <person name="Burr T.J."/>
            <person name="Banta L."/>
            <person name="Dickerman A.W."/>
            <person name="Paulsen I."/>
            <person name="Otten L."/>
            <person name="Suen G."/>
            <person name="Welch R."/>
            <person name="Almeida N.F."/>
            <person name="Arnold F."/>
            <person name="Burton O.T."/>
            <person name="Du Z."/>
            <person name="Ewing A."/>
            <person name="Godsy E."/>
            <person name="Heisel S."/>
            <person name="Houmiel K.L."/>
            <person name="Jhaveri J."/>
            <person name="Lu J."/>
            <person name="Miller N.M."/>
            <person name="Norton S."/>
            <person name="Chen Q."/>
            <person name="Phoolcharoen W."/>
            <person name="Ohlin V."/>
            <person name="Ondrusek D."/>
            <person name="Pride N."/>
            <person name="Stricklin S.L."/>
            <person name="Sun J."/>
            <person name="Wheeler C."/>
            <person name="Wilson L."/>
            <person name="Zhu H."/>
            <person name="Wood D.W."/>
        </authorList>
    </citation>
    <scope>NUCLEOTIDE SEQUENCE [LARGE SCALE GENOMIC DNA]</scope>
    <source>
        <strain>ATCC BAA-846 / DSM 112012 / S4</strain>
    </source>
</reference>
<protein>
    <recommendedName>
        <fullName evidence="1">5'-nucleotidase SurE</fullName>
        <ecNumber evidence="1">3.1.3.5</ecNumber>
    </recommendedName>
    <alternativeName>
        <fullName evidence="1">Nucleoside 5'-monophosphate phosphohydrolase</fullName>
    </alternativeName>
</protein>
<gene>
    <name evidence="1" type="primary">surE</name>
    <name type="ordered locus">Avi_2664</name>
</gene>
<comment type="function">
    <text evidence="1">Nucleotidase that shows phosphatase activity on nucleoside 5'-monophosphates.</text>
</comment>
<comment type="catalytic activity">
    <reaction evidence="1">
        <text>a ribonucleoside 5'-phosphate + H2O = a ribonucleoside + phosphate</text>
        <dbReference type="Rhea" id="RHEA:12484"/>
        <dbReference type="ChEBI" id="CHEBI:15377"/>
        <dbReference type="ChEBI" id="CHEBI:18254"/>
        <dbReference type="ChEBI" id="CHEBI:43474"/>
        <dbReference type="ChEBI" id="CHEBI:58043"/>
        <dbReference type="EC" id="3.1.3.5"/>
    </reaction>
</comment>
<comment type="cofactor">
    <cofactor evidence="1">
        <name>a divalent metal cation</name>
        <dbReference type="ChEBI" id="CHEBI:60240"/>
    </cofactor>
    <text evidence="1">Binds 1 divalent metal cation per subunit.</text>
</comment>
<comment type="subcellular location">
    <subcellularLocation>
        <location evidence="1">Cytoplasm</location>
    </subcellularLocation>
</comment>
<comment type="similarity">
    <text evidence="1">Belongs to the SurE nucleotidase family.</text>
</comment>
<keyword id="KW-0963">Cytoplasm</keyword>
<keyword id="KW-0378">Hydrolase</keyword>
<keyword id="KW-0479">Metal-binding</keyword>
<keyword id="KW-0547">Nucleotide-binding</keyword>
<keyword id="KW-1185">Reference proteome</keyword>
<evidence type="ECO:0000255" key="1">
    <source>
        <dbReference type="HAMAP-Rule" id="MF_00060"/>
    </source>
</evidence>
<name>SURE_ALLAM</name>
<sequence length="256" mass="27548">MRILLTNDDGIHADGLAVLERIARTLSDDVWIVAPETDQSGLAHSLTLSEPLRLRQLGENRYALRGTPTDCVIMAIRKLLPGKPDLVLSGVNAGANLADDVTYSGTVAGAIEGTVHGVRSFALSQAYSYVAGHSIPWDVVETHAPALIAKLMRIDLPPGTFLNLNFPNCEPGEVAGVDVTSQGKLDFGLSVEERTDGRGLPYFWLRFGDRKGNFRPGTDIGTLRDNRISVTPLKLDLTDYAVQDIIAAALNSEVGS</sequence>
<feature type="chain" id="PRO_1000196580" description="5'-nucleotidase SurE">
    <location>
        <begin position="1"/>
        <end position="256"/>
    </location>
</feature>
<feature type="binding site" evidence="1">
    <location>
        <position position="8"/>
    </location>
    <ligand>
        <name>a divalent metal cation</name>
        <dbReference type="ChEBI" id="CHEBI:60240"/>
    </ligand>
</feature>
<feature type="binding site" evidence="1">
    <location>
        <position position="9"/>
    </location>
    <ligand>
        <name>a divalent metal cation</name>
        <dbReference type="ChEBI" id="CHEBI:60240"/>
    </ligand>
</feature>
<feature type="binding site" evidence="1">
    <location>
        <position position="40"/>
    </location>
    <ligand>
        <name>a divalent metal cation</name>
        <dbReference type="ChEBI" id="CHEBI:60240"/>
    </ligand>
</feature>
<feature type="binding site" evidence="1">
    <location>
        <position position="92"/>
    </location>
    <ligand>
        <name>a divalent metal cation</name>
        <dbReference type="ChEBI" id="CHEBI:60240"/>
    </ligand>
</feature>
<organism>
    <name type="scientific">Allorhizobium ampelinum (strain ATCC BAA-846 / DSM 112012 / S4)</name>
    <name type="common">Agrobacterium vitis (strain S4)</name>
    <dbReference type="NCBI Taxonomy" id="311402"/>
    <lineage>
        <taxon>Bacteria</taxon>
        <taxon>Pseudomonadati</taxon>
        <taxon>Pseudomonadota</taxon>
        <taxon>Alphaproteobacteria</taxon>
        <taxon>Hyphomicrobiales</taxon>
        <taxon>Rhizobiaceae</taxon>
        <taxon>Rhizobium/Agrobacterium group</taxon>
        <taxon>Allorhizobium</taxon>
        <taxon>Allorhizobium ampelinum</taxon>
    </lineage>
</organism>
<accession>B9JXD7</accession>
<proteinExistence type="inferred from homology"/>